<gene>
    <name evidence="1" type="primary">kefG</name>
    <name type="ordered locus">ECSE_3613</name>
</gene>
<keyword id="KW-0997">Cell inner membrane</keyword>
<keyword id="KW-1003">Cell membrane</keyword>
<keyword id="KW-0472">Membrane</keyword>
<keyword id="KW-0520">NAD</keyword>
<keyword id="KW-0560">Oxidoreductase</keyword>
<reference key="1">
    <citation type="journal article" date="2008" name="DNA Res.">
        <title>Complete genome sequence and comparative analysis of the wild-type commensal Escherichia coli strain SE11 isolated from a healthy adult.</title>
        <authorList>
            <person name="Oshima K."/>
            <person name="Toh H."/>
            <person name="Ogura Y."/>
            <person name="Sasamoto H."/>
            <person name="Morita H."/>
            <person name="Park S.-H."/>
            <person name="Ooka T."/>
            <person name="Iyoda S."/>
            <person name="Taylor T.D."/>
            <person name="Hayashi T."/>
            <person name="Itoh K."/>
            <person name="Hattori M."/>
        </authorList>
    </citation>
    <scope>NUCLEOTIDE SEQUENCE [LARGE SCALE GENOMIC DNA]</scope>
    <source>
        <strain>SE11</strain>
    </source>
</reference>
<dbReference type="EC" id="1.6.5.2" evidence="1"/>
<dbReference type="EMBL" id="AP009240">
    <property type="protein sequence ID" value="BAG79137.1"/>
    <property type="molecule type" value="Genomic_DNA"/>
</dbReference>
<dbReference type="SMR" id="B6I2R0"/>
<dbReference type="KEGG" id="ecy:ECSE_3613"/>
<dbReference type="HOGENOM" id="CLU_058643_0_1_6"/>
<dbReference type="Proteomes" id="UP000008199">
    <property type="component" value="Chromosome"/>
</dbReference>
<dbReference type="GO" id="GO:0005886">
    <property type="term" value="C:plasma membrane"/>
    <property type="evidence" value="ECO:0007669"/>
    <property type="project" value="UniProtKB-SubCell"/>
</dbReference>
<dbReference type="GO" id="GO:0009055">
    <property type="term" value="F:electron transfer activity"/>
    <property type="evidence" value="ECO:0007669"/>
    <property type="project" value="TreeGrafter"/>
</dbReference>
<dbReference type="GO" id="GO:0010181">
    <property type="term" value="F:FMN binding"/>
    <property type="evidence" value="ECO:0007669"/>
    <property type="project" value="TreeGrafter"/>
</dbReference>
<dbReference type="GO" id="GO:0050136">
    <property type="term" value="F:NADH:ubiquinone reductase (non-electrogenic) activity"/>
    <property type="evidence" value="ECO:0007669"/>
    <property type="project" value="RHEA"/>
</dbReference>
<dbReference type="GO" id="GO:0008753">
    <property type="term" value="F:NADPH dehydrogenase (quinone) activity"/>
    <property type="evidence" value="ECO:0007669"/>
    <property type="project" value="RHEA"/>
</dbReference>
<dbReference type="GO" id="GO:1901381">
    <property type="term" value="P:positive regulation of potassium ion transmembrane transport"/>
    <property type="evidence" value="ECO:0007669"/>
    <property type="project" value="UniProtKB-UniRule"/>
</dbReference>
<dbReference type="GO" id="GO:0006813">
    <property type="term" value="P:potassium ion transport"/>
    <property type="evidence" value="ECO:0007669"/>
    <property type="project" value="InterPro"/>
</dbReference>
<dbReference type="FunFam" id="3.40.50.360:FF:000013">
    <property type="entry name" value="Glutathione-regulated potassium-efflux system ancillary protein KefG"/>
    <property type="match status" value="1"/>
</dbReference>
<dbReference type="Gene3D" id="3.40.50.360">
    <property type="match status" value="1"/>
</dbReference>
<dbReference type="HAMAP" id="MF_01415">
    <property type="entry name" value="K_H_efflux_KefG"/>
    <property type="match status" value="1"/>
</dbReference>
<dbReference type="InterPro" id="IPR003680">
    <property type="entry name" value="Flavodoxin_fold"/>
</dbReference>
<dbReference type="InterPro" id="IPR029039">
    <property type="entry name" value="Flavoprotein-like_sf"/>
</dbReference>
<dbReference type="InterPro" id="IPR023947">
    <property type="entry name" value="K_H_efflux_KefG"/>
</dbReference>
<dbReference type="InterPro" id="IPR046980">
    <property type="entry name" value="KefG/KefF"/>
</dbReference>
<dbReference type="NCBIfam" id="NF003430">
    <property type="entry name" value="PRK04930.1"/>
    <property type="match status" value="1"/>
</dbReference>
<dbReference type="PANTHER" id="PTHR47307">
    <property type="entry name" value="GLUTATHIONE-REGULATED POTASSIUM-EFFLUX SYSTEM ANCILLARY PROTEIN KEFG"/>
    <property type="match status" value="1"/>
</dbReference>
<dbReference type="PANTHER" id="PTHR47307:SF1">
    <property type="entry name" value="GLUTATHIONE-REGULATED POTASSIUM-EFFLUX SYSTEM ANCILLARY PROTEIN KEFG"/>
    <property type="match status" value="1"/>
</dbReference>
<dbReference type="Pfam" id="PF02525">
    <property type="entry name" value="Flavodoxin_2"/>
    <property type="match status" value="1"/>
</dbReference>
<dbReference type="SUPFAM" id="SSF52218">
    <property type="entry name" value="Flavoproteins"/>
    <property type="match status" value="1"/>
</dbReference>
<accession>B6I2R0</accession>
<protein>
    <recommendedName>
        <fullName evidence="1">Glutathione-regulated potassium-efflux system ancillary protein KefG</fullName>
    </recommendedName>
    <alternativeName>
        <fullName evidence="1">Putative quinone oxidoreductase KefG</fullName>
        <ecNumber evidence="1">1.6.5.2</ecNumber>
    </alternativeName>
</protein>
<sequence length="184" mass="20958">MMSQPAKVLLLYAHPESQDSVANRVLLKPATQLSNVTVHDLYAHYPDFFIDIPREQALLREHEVIVFQHPLYTYSCPALLKEWLDRVLSRGFASGPGGNQLAGKYWRSVITTGEPESAYRYDALNRYPMSDVLRPFELAAGMCRMHWLSPIIIYWARRQSAQELASHARAYGDWLANPLSPGGR</sequence>
<proteinExistence type="inferred from homology"/>
<comment type="function">
    <text evidence="1">Regulatory subunit of a potassium efflux system that confers protection against electrophiles. Required for full activity of KefB.</text>
</comment>
<comment type="catalytic activity">
    <reaction evidence="1">
        <text>a quinone + NADH + H(+) = a quinol + NAD(+)</text>
        <dbReference type="Rhea" id="RHEA:46160"/>
        <dbReference type="ChEBI" id="CHEBI:15378"/>
        <dbReference type="ChEBI" id="CHEBI:24646"/>
        <dbReference type="ChEBI" id="CHEBI:57540"/>
        <dbReference type="ChEBI" id="CHEBI:57945"/>
        <dbReference type="ChEBI" id="CHEBI:132124"/>
        <dbReference type="EC" id="1.6.5.2"/>
    </reaction>
</comment>
<comment type="catalytic activity">
    <reaction evidence="1">
        <text>a quinone + NADPH + H(+) = a quinol + NADP(+)</text>
        <dbReference type="Rhea" id="RHEA:46164"/>
        <dbReference type="ChEBI" id="CHEBI:15378"/>
        <dbReference type="ChEBI" id="CHEBI:24646"/>
        <dbReference type="ChEBI" id="CHEBI:57783"/>
        <dbReference type="ChEBI" id="CHEBI:58349"/>
        <dbReference type="ChEBI" id="CHEBI:132124"/>
        <dbReference type="EC" id="1.6.5.2"/>
    </reaction>
</comment>
<comment type="subunit">
    <text evidence="1">Interacts with KefB.</text>
</comment>
<comment type="subcellular location">
    <subcellularLocation>
        <location evidence="1">Cell inner membrane</location>
        <topology evidence="1">Peripheral membrane protein</topology>
        <orientation evidence="1">Cytoplasmic side</orientation>
    </subcellularLocation>
</comment>
<comment type="similarity">
    <text evidence="1">Belongs to the NAD(P)H dehydrogenase (quinone) family. KefG subfamily.</text>
</comment>
<feature type="chain" id="PRO_1000145577" description="Glutathione-regulated potassium-efflux system ancillary protein KefG">
    <location>
        <begin position="1"/>
        <end position="184"/>
    </location>
</feature>
<evidence type="ECO:0000255" key="1">
    <source>
        <dbReference type="HAMAP-Rule" id="MF_01415"/>
    </source>
</evidence>
<name>KEFG_ECOSE</name>
<organism>
    <name type="scientific">Escherichia coli (strain SE11)</name>
    <dbReference type="NCBI Taxonomy" id="409438"/>
    <lineage>
        <taxon>Bacteria</taxon>
        <taxon>Pseudomonadati</taxon>
        <taxon>Pseudomonadota</taxon>
        <taxon>Gammaproteobacteria</taxon>
        <taxon>Enterobacterales</taxon>
        <taxon>Enterobacteriaceae</taxon>
        <taxon>Escherichia</taxon>
    </lineage>
</organism>